<keyword id="KW-0963">Cytoplasm</keyword>
<keyword id="KW-0255">Endonuclease</keyword>
<keyword id="KW-0378">Hydrolase</keyword>
<keyword id="KW-0479">Metal-binding</keyword>
<keyword id="KW-0540">Nuclease</keyword>
<keyword id="KW-1185">Reference proteome</keyword>
<keyword id="KW-0690">Ribosome biogenesis</keyword>
<keyword id="KW-0698">rRNA processing</keyword>
<keyword id="KW-0862">Zinc</keyword>
<evidence type="ECO:0000255" key="1">
    <source>
        <dbReference type="HAMAP-Rule" id="MF_00009"/>
    </source>
</evidence>
<evidence type="ECO:0000256" key="2">
    <source>
        <dbReference type="SAM" id="MobiDB-lite"/>
    </source>
</evidence>
<comment type="function">
    <text evidence="1">Single strand-specific metallo-endoribonuclease involved in late-stage 70S ribosome quality control and in maturation of the 3' terminus of the 16S rRNA.</text>
</comment>
<comment type="cofactor">
    <cofactor evidence="1">
        <name>Zn(2+)</name>
        <dbReference type="ChEBI" id="CHEBI:29105"/>
    </cofactor>
    <text evidence="1">Binds 1 zinc ion.</text>
</comment>
<comment type="subcellular location">
    <subcellularLocation>
        <location evidence="1">Cytoplasm</location>
    </subcellularLocation>
</comment>
<comment type="similarity">
    <text evidence="1">Belongs to the endoribonuclease YbeY family.</text>
</comment>
<gene>
    <name evidence="1" type="primary">ybeY</name>
    <name type="ordered locus">Francci3_1268</name>
</gene>
<dbReference type="EC" id="3.1.-.-" evidence="1"/>
<dbReference type="EMBL" id="CP000249">
    <property type="protein sequence ID" value="ABD10646.1"/>
    <property type="molecule type" value="Genomic_DNA"/>
</dbReference>
<dbReference type="RefSeq" id="WP_011435712.1">
    <property type="nucleotide sequence ID" value="NZ_JENI01000006.1"/>
</dbReference>
<dbReference type="SMR" id="Q2JDJ6"/>
<dbReference type="STRING" id="106370.Francci3_1268"/>
<dbReference type="KEGG" id="fra:Francci3_1268"/>
<dbReference type="eggNOG" id="COG0319">
    <property type="taxonomic scope" value="Bacteria"/>
</dbReference>
<dbReference type="HOGENOM" id="CLU_106710_3_2_11"/>
<dbReference type="OrthoDB" id="9807740at2"/>
<dbReference type="PhylomeDB" id="Q2JDJ6"/>
<dbReference type="Proteomes" id="UP000001937">
    <property type="component" value="Chromosome"/>
</dbReference>
<dbReference type="GO" id="GO:0005737">
    <property type="term" value="C:cytoplasm"/>
    <property type="evidence" value="ECO:0007669"/>
    <property type="project" value="UniProtKB-SubCell"/>
</dbReference>
<dbReference type="GO" id="GO:0004222">
    <property type="term" value="F:metalloendopeptidase activity"/>
    <property type="evidence" value="ECO:0007669"/>
    <property type="project" value="InterPro"/>
</dbReference>
<dbReference type="GO" id="GO:0004521">
    <property type="term" value="F:RNA endonuclease activity"/>
    <property type="evidence" value="ECO:0007669"/>
    <property type="project" value="UniProtKB-UniRule"/>
</dbReference>
<dbReference type="GO" id="GO:0008270">
    <property type="term" value="F:zinc ion binding"/>
    <property type="evidence" value="ECO:0007669"/>
    <property type="project" value="UniProtKB-UniRule"/>
</dbReference>
<dbReference type="GO" id="GO:0006364">
    <property type="term" value="P:rRNA processing"/>
    <property type="evidence" value="ECO:0007669"/>
    <property type="project" value="UniProtKB-UniRule"/>
</dbReference>
<dbReference type="Gene3D" id="3.40.390.30">
    <property type="entry name" value="Metalloproteases ('zincins'), catalytic domain"/>
    <property type="match status" value="1"/>
</dbReference>
<dbReference type="HAMAP" id="MF_00009">
    <property type="entry name" value="Endoribonucl_YbeY"/>
    <property type="match status" value="1"/>
</dbReference>
<dbReference type="InterPro" id="IPR023091">
    <property type="entry name" value="MetalPrtase_cat_dom_sf_prd"/>
</dbReference>
<dbReference type="InterPro" id="IPR002036">
    <property type="entry name" value="YbeY"/>
</dbReference>
<dbReference type="InterPro" id="IPR020549">
    <property type="entry name" value="YbeY_CS"/>
</dbReference>
<dbReference type="NCBIfam" id="TIGR00043">
    <property type="entry name" value="rRNA maturation RNase YbeY"/>
    <property type="match status" value="1"/>
</dbReference>
<dbReference type="PANTHER" id="PTHR46986">
    <property type="entry name" value="ENDORIBONUCLEASE YBEY, CHLOROPLASTIC"/>
    <property type="match status" value="1"/>
</dbReference>
<dbReference type="PANTHER" id="PTHR46986:SF1">
    <property type="entry name" value="ENDORIBONUCLEASE YBEY, CHLOROPLASTIC"/>
    <property type="match status" value="1"/>
</dbReference>
<dbReference type="Pfam" id="PF02130">
    <property type="entry name" value="YbeY"/>
    <property type="match status" value="1"/>
</dbReference>
<dbReference type="SUPFAM" id="SSF55486">
    <property type="entry name" value="Metalloproteases ('zincins'), catalytic domain"/>
    <property type="match status" value="1"/>
</dbReference>
<dbReference type="PROSITE" id="PS01306">
    <property type="entry name" value="UPF0054"/>
    <property type="match status" value="1"/>
</dbReference>
<reference key="1">
    <citation type="journal article" date="2007" name="Genome Res.">
        <title>Genome characteristics of facultatively symbiotic Frankia sp. strains reflect host range and host plant biogeography.</title>
        <authorList>
            <person name="Normand P."/>
            <person name="Lapierre P."/>
            <person name="Tisa L.S."/>
            <person name="Gogarten J.P."/>
            <person name="Alloisio N."/>
            <person name="Bagnarol E."/>
            <person name="Bassi C.A."/>
            <person name="Berry A.M."/>
            <person name="Bickhart D.M."/>
            <person name="Choisne N."/>
            <person name="Couloux A."/>
            <person name="Cournoyer B."/>
            <person name="Cruveiller S."/>
            <person name="Daubin V."/>
            <person name="Demange N."/>
            <person name="Francino M.P."/>
            <person name="Goltsman E."/>
            <person name="Huang Y."/>
            <person name="Kopp O.R."/>
            <person name="Labarre L."/>
            <person name="Lapidus A."/>
            <person name="Lavire C."/>
            <person name="Marechal J."/>
            <person name="Martinez M."/>
            <person name="Mastronunzio J.E."/>
            <person name="Mullin B.C."/>
            <person name="Niemann J."/>
            <person name="Pujic P."/>
            <person name="Rawnsley T."/>
            <person name="Rouy Z."/>
            <person name="Schenowitz C."/>
            <person name="Sellstedt A."/>
            <person name="Tavares F."/>
            <person name="Tomkins J.P."/>
            <person name="Vallenet D."/>
            <person name="Valverde C."/>
            <person name="Wall L.G."/>
            <person name="Wang Y."/>
            <person name="Medigue C."/>
            <person name="Benson D.R."/>
        </authorList>
    </citation>
    <scope>NUCLEOTIDE SEQUENCE [LARGE SCALE GENOMIC DNA]</scope>
    <source>
        <strain>DSM 45818 / CECT 9043 / HFP020203 / CcI3</strain>
    </source>
</reference>
<organism>
    <name type="scientific">Frankia casuarinae (strain DSM 45818 / CECT 9043 / HFP020203 / CcI3)</name>
    <dbReference type="NCBI Taxonomy" id="106370"/>
    <lineage>
        <taxon>Bacteria</taxon>
        <taxon>Bacillati</taxon>
        <taxon>Actinomycetota</taxon>
        <taxon>Actinomycetes</taxon>
        <taxon>Frankiales</taxon>
        <taxon>Frankiaceae</taxon>
        <taxon>Frankia</taxon>
    </lineage>
</organism>
<proteinExistence type="inferred from homology"/>
<feature type="chain" id="PRO_0000284212" description="Endoribonuclease YbeY">
    <location>
        <begin position="1"/>
        <end position="201"/>
    </location>
</feature>
<feature type="region of interest" description="Disordered" evidence="2">
    <location>
        <begin position="151"/>
        <end position="201"/>
    </location>
</feature>
<feature type="compositionally biased region" description="Basic and acidic residues" evidence="2">
    <location>
        <begin position="173"/>
        <end position="186"/>
    </location>
</feature>
<feature type="binding site" evidence="1">
    <location>
        <position position="120"/>
    </location>
    <ligand>
        <name>Zn(2+)</name>
        <dbReference type="ChEBI" id="CHEBI:29105"/>
        <note>catalytic</note>
    </ligand>
</feature>
<feature type="binding site" evidence="1">
    <location>
        <position position="124"/>
    </location>
    <ligand>
        <name>Zn(2+)</name>
        <dbReference type="ChEBI" id="CHEBI:29105"/>
        <note>catalytic</note>
    </ligand>
</feature>
<feature type="binding site" evidence="1">
    <location>
        <position position="130"/>
    </location>
    <ligand>
        <name>Zn(2+)</name>
        <dbReference type="ChEBI" id="CHEBI:29105"/>
        <note>catalytic</note>
    </ligand>
</feature>
<protein>
    <recommendedName>
        <fullName evidence="1">Endoribonuclease YbeY</fullName>
        <ecNumber evidence="1">3.1.-.-</ecNumber>
    </recommendedName>
</protein>
<sequence>MAVFVANESGASDVDEVRLAALARFVLDAMKVNPLAELSVMLVEPKAMTDLHVRYMGEEGPTDVLSFPQDDAFDASWSESVDDDPTTLLGDVVLCPDVARRQAEQAGHSFDRELSLLCTHGILHLLGYDHAEPDEEREMWKVQSQLLASWDGADGADGADGARGAADGAADGGEGRRGDQGRRGDQGRGGGAGEPPAAPAR</sequence>
<accession>Q2JDJ6</accession>
<name>YBEY_FRACC</name>